<evidence type="ECO:0000250" key="1">
    <source>
        <dbReference type="UniProtKB" id="P04798"/>
    </source>
</evidence>
<evidence type="ECO:0000269" key="2">
    <source>
    </source>
</evidence>
<evidence type="ECO:0000303" key="3">
    <source>
    </source>
</evidence>
<evidence type="ECO:0000305" key="4"/>
<evidence type="ECO:0000305" key="5">
    <source>
    </source>
</evidence>
<keyword id="KW-0349">Heme</keyword>
<keyword id="KW-0408">Iron</keyword>
<keyword id="KW-0479">Metal-binding</keyword>
<keyword id="KW-0503">Monooxygenase</keyword>
<keyword id="KW-0560">Oxidoreductase</keyword>
<keyword id="KW-1185">Reference proteome</keyword>
<protein>
    <recommendedName>
        <fullName evidence="3">Cytochrome P450 monooxygenase anuE</fullName>
        <ecNumber evidence="2">1.-.-.-</ecNumber>
    </recommendedName>
    <alternativeName>
        <fullName evidence="3">Flavoglaucin biosynthesis cluster protein E</fullName>
    </alternativeName>
</protein>
<gene>
    <name evidence="3" type="primary">anuE</name>
    <name type="ORF">PROQFM164_S03g001178</name>
</gene>
<comment type="function">
    <text evidence="2 5">Cytochrome P450 monooxygenase; part of the gene cluster that mediates the biosynthesis of annullatin D, an alkylated aromatic polyketide with a fused dihydrobenzofuran lactone ring system that exhibits potent agonistic activities toward the cannabinoid receptors (PubMed:35939524). Within the pathway, anuE catalyzes the hydroxylation of 2-hydroxymethyl-3-pentylphenol at the side chain to produce (8S)-annullatin E (PubMed:35939524). The annullatin backbone 2-hydroxymethyl-3-pentylphenol is assembled from one acetyl-CoA starter unit and 5 malonyl-CoA elongation units by cooperation of the highly reducing polyketide synthase anuA, the short-chain dehydrogenase anuB and the oxidoreductase anuC, before being hydroxylated at the C-5 alkyl chain by the cytochrome P450 monooxygenase anuE to form (8S)-annullatin E. The prenyltransferase anuH subsequently installs one isoprenyl group at the benzene ring to form (8S)-annullatin J. Enzymatic or nonenzymatic dihydro-benzofuran ring formation between the prenyl and the phenolic hydroxyl groups in (8S)-annullatin J results in two diastereomers (2S,9S)-annullatin H and compound 12. The intermediate (2S,9S)-annullatin H is then converted to (2S,9S)-annullatin D by the FAD-linked oxidoreductase anuG-catalyzed five-member lactone ring formation. The isomer 12 acts as a substrate for the short-chain dehydrogenase anuF and is oxidized to (2R)-annullatin F, which is subsequently acetylated by an acetyltransferase leading to (2R)-annullatin G formation. The remaining enzymes identified within the cluster, anuD, anuI and anuJ, seem not to be involved in annullatin biosynthesis (Probable).</text>
</comment>
<comment type="catalytic activity">
    <reaction evidence="2">
        <text>2-hydroxymethyl-3-pentylphenol + reduced [NADPH--hemoprotein reductase] + O2 = (8S)-annullatin E + oxidized [NADPH--hemoprotein reductase] + H2O + H(+)</text>
        <dbReference type="Rhea" id="RHEA:76419"/>
        <dbReference type="Rhea" id="RHEA-COMP:11964"/>
        <dbReference type="Rhea" id="RHEA-COMP:11965"/>
        <dbReference type="ChEBI" id="CHEBI:15377"/>
        <dbReference type="ChEBI" id="CHEBI:15378"/>
        <dbReference type="ChEBI" id="CHEBI:15379"/>
        <dbReference type="ChEBI" id="CHEBI:57618"/>
        <dbReference type="ChEBI" id="CHEBI:58210"/>
        <dbReference type="ChEBI" id="CHEBI:195220"/>
        <dbReference type="ChEBI" id="CHEBI:195221"/>
    </reaction>
    <physiologicalReaction direction="left-to-right" evidence="2">
        <dbReference type="Rhea" id="RHEA:76420"/>
    </physiologicalReaction>
</comment>
<comment type="cofactor">
    <cofactor evidence="1">
        <name>heme</name>
        <dbReference type="ChEBI" id="CHEBI:30413"/>
    </cofactor>
</comment>
<comment type="pathway">
    <text evidence="2">Secondary metabolite biosynthesis.</text>
</comment>
<comment type="disruption phenotype">
    <text evidence="2">Abolishes the production of (2R)-annullatin F, (2S,9S)-annullatin D, (2R)-annullatin G and (2S,9S)-annullatin H, and leads to the accumulation of (14S)-annullatin I, 2-hydroxymethyl-3-pentylphenol, (2S)-annullatin B and (2S)-annullatin A.</text>
</comment>
<comment type="similarity">
    <text evidence="4">Belongs to the cytochrome P450 family.</text>
</comment>
<name>ANUE_PENRF</name>
<organism>
    <name type="scientific">Penicillium roqueforti (strain FM164)</name>
    <dbReference type="NCBI Taxonomy" id="1365484"/>
    <lineage>
        <taxon>Eukaryota</taxon>
        <taxon>Fungi</taxon>
        <taxon>Dikarya</taxon>
        <taxon>Ascomycota</taxon>
        <taxon>Pezizomycotina</taxon>
        <taxon>Eurotiomycetes</taxon>
        <taxon>Eurotiomycetidae</taxon>
        <taxon>Eurotiales</taxon>
        <taxon>Aspergillaceae</taxon>
        <taxon>Penicillium</taxon>
    </lineage>
</organism>
<accession>W6QJR1</accession>
<dbReference type="EC" id="1.-.-.-" evidence="2"/>
<dbReference type="EMBL" id="HG792017">
    <property type="protein sequence ID" value="CDM34454.1"/>
    <property type="molecule type" value="Genomic_DNA"/>
</dbReference>
<dbReference type="SMR" id="W6QJR1"/>
<dbReference type="STRING" id="1365484.W6QJR1"/>
<dbReference type="OMA" id="VAMIVKE"/>
<dbReference type="OrthoDB" id="1103324at2759"/>
<dbReference type="Proteomes" id="UP000030686">
    <property type="component" value="Unassembled WGS sequence"/>
</dbReference>
<dbReference type="GO" id="GO:0020037">
    <property type="term" value="F:heme binding"/>
    <property type="evidence" value="ECO:0007669"/>
    <property type="project" value="InterPro"/>
</dbReference>
<dbReference type="GO" id="GO:0005506">
    <property type="term" value="F:iron ion binding"/>
    <property type="evidence" value="ECO:0007669"/>
    <property type="project" value="InterPro"/>
</dbReference>
<dbReference type="GO" id="GO:0004497">
    <property type="term" value="F:monooxygenase activity"/>
    <property type="evidence" value="ECO:0007669"/>
    <property type="project" value="UniProtKB-KW"/>
</dbReference>
<dbReference type="GO" id="GO:0016705">
    <property type="term" value="F:oxidoreductase activity, acting on paired donors, with incorporation or reduction of molecular oxygen"/>
    <property type="evidence" value="ECO:0007669"/>
    <property type="project" value="InterPro"/>
</dbReference>
<dbReference type="GO" id="GO:0043386">
    <property type="term" value="P:mycotoxin biosynthetic process"/>
    <property type="evidence" value="ECO:0007669"/>
    <property type="project" value="UniProtKB-ARBA"/>
</dbReference>
<dbReference type="CDD" id="cd11065">
    <property type="entry name" value="CYP64-like"/>
    <property type="match status" value="1"/>
</dbReference>
<dbReference type="Gene3D" id="1.10.630.10">
    <property type="entry name" value="Cytochrome P450"/>
    <property type="match status" value="1"/>
</dbReference>
<dbReference type="InterPro" id="IPR001128">
    <property type="entry name" value="Cyt_P450"/>
</dbReference>
<dbReference type="InterPro" id="IPR002401">
    <property type="entry name" value="Cyt_P450_E_grp-I"/>
</dbReference>
<dbReference type="InterPro" id="IPR036396">
    <property type="entry name" value="Cyt_P450_sf"/>
</dbReference>
<dbReference type="InterPro" id="IPR050364">
    <property type="entry name" value="Cytochrome_P450_fung"/>
</dbReference>
<dbReference type="PANTHER" id="PTHR46300:SF2">
    <property type="entry name" value="CYTOCHROME P450 MONOOXYGENASE ALNH-RELATED"/>
    <property type="match status" value="1"/>
</dbReference>
<dbReference type="PANTHER" id="PTHR46300">
    <property type="entry name" value="P450, PUTATIVE (EUROFUNG)-RELATED-RELATED"/>
    <property type="match status" value="1"/>
</dbReference>
<dbReference type="Pfam" id="PF00067">
    <property type="entry name" value="p450"/>
    <property type="match status" value="1"/>
</dbReference>
<dbReference type="PRINTS" id="PR00463">
    <property type="entry name" value="EP450I"/>
</dbReference>
<dbReference type="PRINTS" id="PR00385">
    <property type="entry name" value="P450"/>
</dbReference>
<dbReference type="SUPFAM" id="SSF48264">
    <property type="entry name" value="Cytochrome P450"/>
    <property type="match status" value="1"/>
</dbReference>
<feature type="chain" id="PRO_0000458201" description="Cytochrome P450 monooxygenase anuE">
    <location>
        <begin position="1"/>
        <end position="490"/>
    </location>
</feature>
<feature type="binding site" description="axial binding residue" evidence="1">
    <location>
        <position position="405"/>
    </location>
    <ligand>
        <name>heme</name>
        <dbReference type="ChEBI" id="CHEBI:30413"/>
    </ligand>
    <ligandPart>
        <name>Fe</name>
        <dbReference type="ChEBI" id="CHEBI:18248"/>
    </ligandPart>
</feature>
<proteinExistence type="evidence at protein level"/>
<sequence>MAIELGLFAKTALASRFTDWAKQYGPVFPLRIGSHGLMVVLTSAYHATHLLDKRSANSSNRPPSFVLGDLVFAGDHPMFMDANERWKLRRKLYFQLMNEARCNTEHIRLVEAEATHLLRDLCLEPDSFMQHPARYSNSIIMSLVFGIRTPHYSSPHCIELQRIVTELSNLGEIGASPPVDWLPFLKYLPERLWGDWKTRAARLRQRVLNLHSPLVDRVLERRKNIGTAATFLDGVLDRQEKLQLTREEIDIMCGNLLEGGTDTMATTILTFFQAMVTYPEVQARAQKQIDSVLTDGECPSWSDYDRLPYVAMIVKEVLRWRPPAPGSFPHTLAQDDEFEGMKFLKGTSVVLNVWGIHNDESRYPSPETFEPSRFAEQTRLASVYANAGDAQKRDHFGYGAGRRICPGIHLAERALFIAMAKLLWGFTVQQKLDSSGNPIPVDVNPATAYRDGFLNQCLPFDIDIKPRLGRQEMIMVAAAKAENDVLSAYE</sequence>
<reference key="1">
    <citation type="journal article" date="2014" name="Nat. Commun.">
        <title>Multiple recent horizontal transfers of a large genomic region in cheese making fungi.</title>
        <authorList>
            <person name="Cheeseman K."/>
            <person name="Ropars J."/>
            <person name="Renault P."/>
            <person name="Dupont J."/>
            <person name="Gouzy J."/>
            <person name="Branca A."/>
            <person name="Abraham A.-L."/>
            <person name="Ceppi M."/>
            <person name="Conseiller E."/>
            <person name="Debuchy R."/>
            <person name="Malagnac F."/>
            <person name="Goarin A."/>
            <person name="Silar P."/>
            <person name="Lacoste S."/>
            <person name="Sallet E."/>
            <person name="Bensimon A."/>
            <person name="Giraud T."/>
            <person name="Brygoo Y."/>
        </authorList>
    </citation>
    <scope>NUCLEOTIDE SEQUENCE [LARGE SCALE GENOMIC DNA]</scope>
    <source>
        <strain>FM164</strain>
    </source>
</reference>
<reference key="2">
    <citation type="journal article" date="2022" name="Org. Lett.">
        <title>Biosynthesis of Annullatin D in Penicillium roqueforti Implies Oxidative Lactonization between Two Hydroxyl Groups Catalyzed by a BBE-like Enzyme.</title>
        <authorList>
            <person name="Xiang P."/>
            <person name="Kemmerich B."/>
            <person name="Yang L."/>
            <person name="Li S.M."/>
        </authorList>
    </citation>
    <scope>FUNCTION</scope>
    <scope>CATALYTIC ACTIVITY</scope>
    <scope>DISRUPTION PHENOTYPE</scope>
    <scope>PATHWAY</scope>
</reference>